<accession>P41979</accession>
<comment type="function">
    <text>Destroys superoxide anion radicals which are normally produced within the cells and which are toxic to biological systems.</text>
</comment>
<comment type="catalytic activity">
    <reaction>
        <text>2 superoxide + 2 H(+) = H2O2 + O2</text>
        <dbReference type="Rhea" id="RHEA:20696"/>
        <dbReference type="ChEBI" id="CHEBI:15378"/>
        <dbReference type="ChEBI" id="CHEBI:15379"/>
        <dbReference type="ChEBI" id="CHEBI:16240"/>
        <dbReference type="ChEBI" id="CHEBI:18421"/>
        <dbReference type="EC" id="1.15.1.1"/>
    </reaction>
</comment>
<comment type="cofactor">
    <cofactor evidence="1">
        <name>Mn(2+)</name>
        <dbReference type="ChEBI" id="CHEBI:29035"/>
    </cofactor>
    <text evidence="1">Binds 1 Mn(2+) ion per subunit.</text>
</comment>
<comment type="subunit">
    <text evidence="1">Homotetramer.</text>
</comment>
<comment type="subcellular location">
    <subcellularLocation>
        <location>Mitochondrion matrix</location>
    </subcellularLocation>
</comment>
<comment type="tissue specificity">
    <text>Predominantly expressed in the embryo late in embryogenesis.</text>
</comment>
<comment type="similarity">
    <text evidence="2">Belongs to the iron/manganese superoxide dismutase family.</text>
</comment>
<name>SODM3_MAIZE</name>
<proteinExistence type="evidence at transcript level"/>
<gene>
    <name type="primary">SODA.2</name>
    <name type="synonym">SOD3.3</name>
</gene>
<keyword id="KW-0464">Manganese</keyword>
<keyword id="KW-0479">Metal-binding</keyword>
<keyword id="KW-0496">Mitochondrion</keyword>
<keyword id="KW-0560">Oxidoreductase</keyword>
<keyword id="KW-1185">Reference proteome</keyword>
<keyword id="KW-0809">Transit peptide</keyword>
<protein>
    <recommendedName>
        <fullName>Superoxide dismutase [Mn] 3.3, mitochondrial</fullName>
        <ecNumber>1.15.1.1</ecNumber>
    </recommendedName>
</protein>
<sequence length="233" mass="25448">MALRTLASKNALSFALGGAARPSAESARGVTTVALPDLSYDFGALEPVISGEIMRLHHQKNHATYVVNYNKALEQIDDVVVKGDDSAVVQLQGAIKFNGGGHVNHSIFWKNLKPISEGGGEPPHGKLGWAIDEDFGSFEALVKRMNAEGAALQGSGWVWLALDKEAKKVSVETTANQDPLVTKGASLVPLLGIDVWEHAYYLQYKNVRPDYLNNIWKVMNWKYAGEVYENVLA</sequence>
<reference key="1">
    <citation type="journal article" date="1993" name="Proc. Natl. Acad. Sci. U.S.A.">
        <title>Maize mitochondrial manganese superoxide dismutases are encoded by a differentially expressed multigene family.</title>
        <authorList>
            <person name="Zhu D."/>
            <person name="Scandalios J.G."/>
        </authorList>
    </citation>
    <scope>NUCLEOTIDE SEQUENCE [MRNA]</scope>
</reference>
<evidence type="ECO:0000250" key="1"/>
<evidence type="ECO:0000305" key="2"/>
<dbReference type="EC" id="1.15.1.1"/>
<dbReference type="EMBL" id="L19462">
    <property type="protein sequence ID" value="AAA72021.2"/>
    <property type="molecule type" value="mRNA"/>
</dbReference>
<dbReference type="PIR" id="A48684">
    <property type="entry name" value="A48684"/>
</dbReference>
<dbReference type="SMR" id="P41979"/>
<dbReference type="FunCoup" id="P41979">
    <property type="interactions" value="2657"/>
</dbReference>
<dbReference type="STRING" id="4577.P41979"/>
<dbReference type="MaizeGDB" id="47587"/>
<dbReference type="InParanoid" id="P41979"/>
<dbReference type="Proteomes" id="UP000007305">
    <property type="component" value="Unplaced"/>
</dbReference>
<dbReference type="ExpressionAtlas" id="P41979">
    <property type="expression patterns" value="baseline and differential"/>
</dbReference>
<dbReference type="GO" id="GO:0005759">
    <property type="term" value="C:mitochondrial matrix"/>
    <property type="evidence" value="ECO:0007669"/>
    <property type="project" value="UniProtKB-SubCell"/>
</dbReference>
<dbReference type="GO" id="GO:0005739">
    <property type="term" value="C:mitochondrion"/>
    <property type="evidence" value="ECO:0000318"/>
    <property type="project" value="GO_Central"/>
</dbReference>
<dbReference type="GO" id="GO:0030145">
    <property type="term" value="F:manganese ion binding"/>
    <property type="evidence" value="ECO:0000318"/>
    <property type="project" value="GO_Central"/>
</dbReference>
<dbReference type="GO" id="GO:0004784">
    <property type="term" value="F:superoxide dismutase activity"/>
    <property type="evidence" value="ECO:0000318"/>
    <property type="project" value="GO_Central"/>
</dbReference>
<dbReference type="GO" id="GO:0009737">
    <property type="term" value="P:response to abscisic acid"/>
    <property type="evidence" value="ECO:0000270"/>
    <property type="project" value="AgBase"/>
</dbReference>
<dbReference type="GO" id="GO:0006970">
    <property type="term" value="P:response to osmotic stress"/>
    <property type="evidence" value="ECO:0000270"/>
    <property type="project" value="AgBase"/>
</dbReference>
<dbReference type="FunFam" id="1.10.287.990:FF:000001">
    <property type="entry name" value="Superoxide dismutase"/>
    <property type="match status" value="1"/>
</dbReference>
<dbReference type="FunFam" id="3.55.40.20:FF:000002">
    <property type="entry name" value="Superoxide dismutase"/>
    <property type="match status" value="1"/>
</dbReference>
<dbReference type="Gene3D" id="1.10.287.990">
    <property type="entry name" value="Fe,Mn superoxide dismutase (SOD) domain"/>
    <property type="match status" value="1"/>
</dbReference>
<dbReference type="Gene3D" id="3.55.40.20">
    <property type="entry name" value="Iron/manganese superoxide dismutase, C-terminal domain"/>
    <property type="match status" value="1"/>
</dbReference>
<dbReference type="InterPro" id="IPR050265">
    <property type="entry name" value="Fe/Mn_Superoxide_Dismutase"/>
</dbReference>
<dbReference type="InterPro" id="IPR001189">
    <property type="entry name" value="Mn/Fe_SOD"/>
</dbReference>
<dbReference type="InterPro" id="IPR019833">
    <property type="entry name" value="Mn/Fe_SOD_BS"/>
</dbReference>
<dbReference type="InterPro" id="IPR019832">
    <property type="entry name" value="Mn/Fe_SOD_C"/>
</dbReference>
<dbReference type="InterPro" id="IPR019831">
    <property type="entry name" value="Mn/Fe_SOD_N"/>
</dbReference>
<dbReference type="InterPro" id="IPR036324">
    <property type="entry name" value="Mn/Fe_SOD_N_sf"/>
</dbReference>
<dbReference type="InterPro" id="IPR036314">
    <property type="entry name" value="SOD_C_sf"/>
</dbReference>
<dbReference type="PANTHER" id="PTHR11404">
    <property type="entry name" value="SUPEROXIDE DISMUTASE 2"/>
    <property type="match status" value="1"/>
</dbReference>
<dbReference type="PANTHER" id="PTHR11404:SF6">
    <property type="entry name" value="SUPEROXIDE DISMUTASE [MN], MITOCHONDRIAL"/>
    <property type="match status" value="1"/>
</dbReference>
<dbReference type="Pfam" id="PF02777">
    <property type="entry name" value="Sod_Fe_C"/>
    <property type="match status" value="1"/>
</dbReference>
<dbReference type="Pfam" id="PF00081">
    <property type="entry name" value="Sod_Fe_N"/>
    <property type="match status" value="1"/>
</dbReference>
<dbReference type="PIRSF" id="PIRSF000349">
    <property type="entry name" value="SODismutase"/>
    <property type="match status" value="1"/>
</dbReference>
<dbReference type="PRINTS" id="PR01703">
    <property type="entry name" value="MNSODISMTASE"/>
</dbReference>
<dbReference type="SUPFAM" id="SSF54719">
    <property type="entry name" value="Fe,Mn superoxide dismutase (SOD), C-terminal domain"/>
    <property type="match status" value="1"/>
</dbReference>
<dbReference type="SUPFAM" id="SSF46609">
    <property type="entry name" value="Fe,Mn superoxide dismutase (SOD), N-terminal domain"/>
    <property type="match status" value="1"/>
</dbReference>
<dbReference type="PROSITE" id="PS00088">
    <property type="entry name" value="SOD_MN"/>
    <property type="match status" value="1"/>
</dbReference>
<organism>
    <name type="scientific">Zea mays</name>
    <name type="common">Maize</name>
    <dbReference type="NCBI Taxonomy" id="4577"/>
    <lineage>
        <taxon>Eukaryota</taxon>
        <taxon>Viridiplantae</taxon>
        <taxon>Streptophyta</taxon>
        <taxon>Embryophyta</taxon>
        <taxon>Tracheophyta</taxon>
        <taxon>Spermatophyta</taxon>
        <taxon>Magnoliopsida</taxon>
        <taxon>Liliopsida</taxon>
        <taxon>Poales</taxon>
        <taxon>Poaceae</taxon>
        <taxon>PACMAD clade</taxon>
        <taxon>Panicoideae</taxon>
        <taxon>Andropogonodae</taxon>
        <taxon>Andropogoneae</taxon>
        <taxon>Tripsacinae</taxon>
        <taxon>Zea</taxon>
    </lineage>
</organism>
<feature type="transit peptide" description="Mitochondrion" evidence="1">
    <location>
        <begin position="1"/>
        <end position="29"/>
    </location>
</feature>
<feature type="chain" id="PRO_0000032897" description="Superoxide dismutase [Mn] 3.3, mitochondrial">
    <location>
        <begin position="30"/>
        <end position="233"/>
    </location>
</feature>
<feature type="binding site" evidence="1">
    <location>
        <position position="57"/>
    </location>
    <ligand>
        <name>Mn(2+)</name>
        <dbReference type="ChEBI" id="CHEBI:29035"/>
    </ligand>
</feature>
<feature type="binding site" evidence="1">
    <location>
        <position position="105"/>
    </location>
    <ligand>
        <name>Mn(2+)</name>
        <dbReference type="ChEBI" id="CHEBI:29035"/>
    </ligand>
</feature>
<feature type="binding site" evidence="1">
    <location>
        <position position="194"/>
    </location>
    <ligand>
        <name>Mn(2+)</name>
        <dbReference type="ChEBI" id="CHEBI:29035"/>
    </ligand>
</feature>
<feature type="binding site" evidence="1">
    <location>
        <position position="198"/>
    </location>
    <ligand>
        <name>Mn(2+)</name>
        <dbReference type="ChEBI" id="CHEBI:29035"/>
    </ligand>
</feature>